<keyword id="KW-0106">Calcium</keyword>
<keyword id="KW-0130">Cell adhesion</keyword>
<keyword id="KW-1003">Cell membrane</keyword>
<keyword id="KW-1015">Disulfide bond</keyword>
<keyword id="KW-0325">Glycoprotein</keyword>
<keyword id="KW-0472">Membrane</keyword>
<keyword id="KW-1185">Reference proteome</keyword>
<keyword id="KW-0677">Repeat</keyword>
<keyword id="KW-0732">Signal</keyword>
<keyword id="KW-0812">Transmembrane</keyword>
<keyword id="KW-1133">Transmembrane helix</keyword>
<proteinExistence type="inferred from homology"/>
<sequence length="798" mass="87414">MEIRGALDLRKRQVLIFLVLLGLSRAGTESAHYSVAEETEIGSFVANLARDLGLGVEELSSREARVVSDDNKKYLHLDLLTGNLLLNEKLDRDELCGSTEPCVLHFQVVLENPLQFFRVELRVKDINDHSPTFLDKEILIKISEGTTVGATFLMESAQDLDVGSNSLQNYTISPNSHFYIKIPDSSDRKIYPELVLDRALDYEQEAELRLTLTAVDGGSPPKSGTTLVLIKVLDINDNAPEFPQSLYEVQVPEDRPLGSWIATISAKDLDAGNYGKISYTFFHASEDIRKTFEINPISGEVNLRSPLDFEVIQSYTINIQATDGGGLSGKCTLLVKVMDINDNPPEVTISSITKRIPENASETLVALFSILDQDSGDNGRMICSIQDNLPFFLKPTFKNFFTLVSEKALDRESQAEYNITITVTDLGTPRLKTEYNITVLVSDVNDNAPAFTQTSYTLFLRENNSPALHIGSVSATDRDSGTNAQVTYSLLPPQDPQLPLASLVSINADNGHLFALRSLDYEALQEFEFRVGATDRGSPALSSEALVRVLVLDANDNSPFVLYPLQNGSAPCTELVPRAAEPGYLVTKVVAVDGDSGQNAWLSYQLLKATEPGLFGVWAHNGEVRTARLLSERDAAKHRLVVLVKDNGEPPRSATATLHVLLVDGFSQPYLPLPEAAPAQAQADSLTVYLVVALASVSSLFLFSVLLFVAVRLCRRSRAASVGRCSVPEGPFPGHLVDVSGTGTLSQSYQYEVCLTGGSGTNEFKFLKPIIPNFQVHDTGKNMGEIENFRNSFGLNIQ</sequence>
<comment type="function">
    <text>Potential calcium-dependent cell-adhesion protein. May be involved in the establishment and maintenance of specific neuronal connections in the brain.</text>
</comment>
<comment type="subcellular location">
    <subcellularLocation>
        <location evidence="1">Cell membrane</location>
        <topology evidence="1">Single-pass type I membrane protein</topology>
    </subcellularLocation>
</comment>
<accession>Q5DRD5</accession>
<gene>
    <name type="primary">PCDHB14</name>
</gene>
<name>PCDBE_PANTR</name>
<reference key="1">
    <citation type="journal article" date="2005" name="Nature">
        <title>Initial sequence of the chimpanzee genome and comparison with the human genome.</title>
        <authorList>
            <consortium name="Chimpanzee sequencing and analysis consortium"/>
        </authorList>
    </citation>
    <scope>NUCLEOTIDE SEQUENCE [LARGE SCALE GENOMIC DNA]</scope>
</reference>
<reference key="2">
    <citation type="journal article" date="2005" name="Genetics">
        <title>Comparative genomics and diversifying selection of the clustered vertebrate protocadherin genes.</title>
        <authorList>
            <person name="Wu Q."/>
        </authorList>
    </citation>
    <scope>IDENTIFICATION</scope>
</reference>
<protein>
    <recommendedName>
        <fullName>Protocadherin beta-14</fullName>
        <shortName>PCDH-beta-14</shortName>
    </recommendedName>
</protein>
<dbReference type="RefSeq" id="NP_001019302.1">
    <property type="nucleotide sequence ID" value="NM_001024131.2"/>
</dbReference>
<dbReference type="SMR" id="Q5DRD5"/>
<dbReference type="FunCoup" id="Q5DRD5">
    <property type="interactions" value="26"/>
</dbReference>
<dbReference type="STRING" id="9598.ENSPTRP00000029638"/>
<dbReference type="GlyCosmos" id="Q5DRD5">
    <property type="glycosylation" value="5 sites, No reported glycans"/>
</dbReference>
<dbReference type="PaxDb" id="9598-ENSPTRP00000029638"/>
<dbReference type="GeneID" id="471666"/>
<dbReference type="KEGG" id="ptr:471666"/>
<dbReference type="CTD" id="56122"/>
<dbReference type="eggNOG" id="KOG3594">
    <property type="taxonomic scope" value="Eukaryota"/>
</dbReference>
<dbReference type="HOGENOM" id="CLU_006480_3_0_1"/>
<dbReference type="InParanoid" id="Q5DRD5"/>
<dbReference type="OrthoDB" id="7900at9604"/>
<dbReference type="TreeFam" id="TF332299"/>
<dbReference type="Proteomes" id="UP000002277">
    <property type="component" value="Unplaced"/>
</dbReference>
<dbReference type="GO" id="GO:0005886">
    <property type="term" value="C:plasma membrane"/>
    <property type="evidence" value="ECO:0000318"/>
    <property type="project" value="GO_Central"/>
</dbReference>
<dbReference type="GO" id="GO:0005509">
    <property type="term" value="F:calcium ion binding"/>
    <property type="evidence" value="ECO:0007669"/>
    <property type="project" value="InterPro"/>
</dbReference>
<dbReference type="GO" id="GO:0007155">
    <property type="term" value="P:cell adhesion"/>
    <property type="evidence" value="ECO:0000318"/>
    <property type="project" value="GO_Central"/>
</dbReference>
<dbReference type="GO" id="GO:0007156">
    <property type="term" value="P:homophilic cell adhesion via plasma membrane adhesion molecules"/>
    <property type="evidence" value="ECO:0007669"/>
    <property type="project" value="InterPro"/>
</dbReference>
<dbReference type="GO" id="GO:0007399">
    <property type="term" value="P:nervous system development"/>
    <property type="evidence" value="ECO:0007669"/>
    <property type="project" value="UniProtKB-ARBA"/>
</dbReference>
<dbReference type="CDD" id="cd11304">
    <property type="entry name" value="Cadherin_repeat"/>
    <property type="match status" value="5"/>
</dbReference>
<dbReference type="FunFam" id="2.60.40.60:FF:000001">
    <property type="entry name" value="Protocadherin alpha 2"/>
    <property type="match status" value="1"/>
</dbReference>
<dbReference type="FunFam" id="2.60.40.60:FF:000002">
    <property type="entry name" value="Protocadherin alpha 2"/>
    <property type="match status" value="1"/>
</dbReference>
<dbReference type="FunFam" id="2.60.40.60:FF:000006">
    <property type="entry name" value="Protocadherin alpha 2"/>
    <property type="match status" value="1"/>
</dbReference>
<dbReference type="FunFam" id="2.60.40.60:FF:000046">
    <property type="entry name" value="Protocadherin beta 5"/>
    <property type="match status" value="1"/>
</dbReference>
<dbReference type="FunFam" id="2.60.40.60:FF:000309">
    <property type="entry name" value="Protocadherin beta-8"/>
    <property type="match status" value="1"/>
</dbReference>
<dbReference type="FunFam" id="2.60.40.60:FF:000018">
    <property type="entry name" value="Protocadherin gamma c3"/>
    <property type="match status" value="1"/>
</dbReference>
<dbReference type="Gene3D" id="2.60.40.60">
    <property type="entry name" value="Cadherins"/>
    <property type="match status" value="6"/>
</dbReference>
<dbReference type="InterPro" id="IPR002126">
    <property type="entry name" value="Cadherin-like_dom"/>
</dbReference>
<dbReference type="InterPro" id="IPR015919">
    <property type="entry name" value="Cadherin-like_sf"/>
</dbReference>
<dbReference type="InterPro" id="IPR032455">
    <property type="entry name" value="Cadherin_C"/>
</dbReference>
<dbReference type="InterPro" id="IPR020894">
    <property type="entry name" value="Cadherin_CS"/>
</dbReference>
<dbReference type="InterPro" id="IPR013164">
    <property type="entry name" value="Cadherin_N"/>
</dbReference>
<dbReference type="InterPro" id="IPR050174">
    <property type="entry name" value="Protocadherin/Cadherin-CA"/>
</dbReference>
<dbReference type="PANTHER" id="PTHR24028">
    <property type="entry name" value="CADHERIN-87A"/>
    <property type="match status" value="1"/>
</dbReference>
<dbReference type="PANTHER" id="PTHR24028:SF81">
    <property type="entry name" value="PROTOCADHERIN BETA-14"/>
    <property type="match status" value="1"/>
</dbReference>
<dbReference type="Pfam" id="PF00028">
    <property type="entry name" value="Cadherin"/>
    <property type="match status" value="5"/>
</dbReference>
<dbReference type="Pfam" id="PF08266">
    <property type="entry name" value="Cadherin_2"/>
    <property type="match status" value="1"/>
</dbReference>
<dbReference type="Pfam" id="PF16492">
    <property type="entry name" value="Cadherin_C_2"/>
    <property type="match status" value="1"/>
</dbReference>
<dbReference type="PRINTS" id="PR00205">
    <property type="entry name" value="CADHERIN"/>
</dbReference>
<dbReference type="SMART" id="SM00112">
    <property type="entry name" value="CA"/>
    <property type="match status" value="6"/>
</dbReference>
<dbReference type="SUPFAM" id="SSF49313">
    <property type="entry name" value="Cadherin-like"/>
    <property type="match status" value="6"/>
</dbReference>
<dbReference type="PROSITE" id="PS00232">
    <property type="entry name" value="CADHERIN_1"/>
    <property type="match status" value="5"/>
</dbReference>
<dbReference type="PROSITE" id="PS50268">
    <property type="entry name" value="CADHERIN_2"/>
    <property type="match status" value="6"/>
</dbReference>
<feature type="signal peptide" evidence="2">
    <location>
        <begin position="1"/>
        <end position="26"/>
    </location>
</feature>
<feature type="chain" id="PRO_0000003941" description="Protocadherin beta-14">
    <location>
        <begin position="27"/>
        <end position="798"/>
    </location>
</feature>
<feature type="topological domain" description="Extracellular" evidence="2">
    <location>
        <begin position="27"/>
        <end position="686"/>
    </location>
</feature>
<feature type="transmembrane region" description="Helical" evidence="2">
    <location>
        <begin position="687"/>
        <end position="711"/>
    </location>
</feature>
<feature type="topological domain" description="Cytoplasmic" evidence="2">
    <location>
        <begin position="712"/>
        <end position="798"/>
    </location>
</feature>
<feature type="domain" description="Cadherin 1" evidence="3">
    <location>
        <begin position="35"/>
        <end position="133"/>
    </location>
</feature>
<feature type="domain" description="Cadherin 2" evidence="3">
    <location>
        <begin position="138"/>
        <end position="242"/>
    </location>
</feature>
<feature type="domain" description="Cadherin 3" evidence="3">
    <location>
        <begin position="247"/>
        <end position="347"/>
    </location>
</feature>
<feature type="domain" description="Cadherin 4" evidence="3">
    <location>
        <begin position="352"/>
        <end position="451"/>
    </location>
</feature>
<feature type="domain" description="Cadherin 5" evidence="3">
    <location>
        <begin position="456"/>
        <end position="561"/>
    </location>
</feature>
<feature type="domain" description="Cadherin 6" evidence="3">
    <location>
        <begin position="568"/>
        <end position="671"/>
    </location>
</feature>
<feature type="glycosylation site" description="N-linked (GlcNAc...) asparagine" evidence="2">
    <location>
        <position position="169"/>
    </location>
</feature>
<feature type="glycosylation site" description="N-linked (GlcNAc...) asparagine" evidence="2">
    <location>
        <position position="359"/>
    </location>
</feature>
<feature type="glycosylation site" description="N-linked (GlcNAc...) asparagine" evidence="2">
    <location>
        <position position="418"/>
    </location>
</feature>
<feature type="glycosylation site" description="N-linked (GlcNAc...) asparagine" evidence="2">
    <location>
        <position position="436"/>
    </location>
</feature>
<feature type="glycosylation site" description="N-linked (GlcNAc...) asparagine" evidence="2">
    <location>
        <position position="567"/>
    </location>
</feature>
<feature type="disulfide bond" evidence="1">
    <location>
        <begin position="96"/>
        <end position="102"/>
    </location>
</feature>
<evidence type="ECO:0000250" key="1"/>
<evidence type="ECO:0000255" key="2"/>
<evidence type="ECO:0000255" key="3">
    <source>
        <dbReference type="PROSITE-ProRule" id="PRU00043"/>
    </source>
</evidence>
<organism>
    <name type="scientific">Pan troglodytes</name>
    <name type="common">Chimpanzee</name>
    <dbReference type="NCBI Taxonomy" id="9598"/>
    <lineage>
        <taxon>Eukaryota</taxon>
        <taxon>Metazoa</taxon>
        <taxon>Chordata</taxon>
        <taxon>Craniata</taxon>
        <taxon>Vertebrata</taxon>
        <taxon>Euteleostomi</taxon>
        <taxon>Mammalia</taxon>
        <taxon>Eutheria</taxon>
        <taxon>Euarchontoglires</taxon>
        <taxon>Primates</taxon>
        <taxon>Haplorrhini</taxon>
        <taxon>Catarrhini</taxon>
        <taxon>Hominidae</taxon>
        <taxon>Pan</taxon>
    </lineage>
</organism>